<protein>
    <recommendedName>
        <fullName evidence="1">Photosystem II reaction center protein H</fullName>
        <shortName evidence="1">PSII-H</shortName>
    </recommendedName>
</protein>
<comment type="function">
    <text evidence="1">One of the components of the core complex of photosystem II (PSII), required for its stability and/or assembly. PSII is a light-driven water:plastoquinone oxidoreductase that uses light energy to abstract electrons from H(2)O, generating O(2) and a proton gradient subsequently used for ATP formation. It consists of a core antenna complex that captures photons, and an electron transfer chain that converts photonic excitation into a charge separation.</text>
</comment>
<comment type="subunit">
    <text evidence="2">PSII is composed of 1 copy each of membrane proteins PsbA, PsbB, PsbC, PsbD, PsbE, PsbF, PsbH, PsbI, PsbJ, PsbK, PsbL, PsbM, PsbT, PsbX, Psb30/Ycf12, peripheral proteins PsbO, CyanoQ (PsbQ), PsbU, PsbV and a large number of cofactors. It forms dimeric complexes.</text>
</comment>
<comment type="subcellular location">
    <subcellularLocation>
        <location evidence="1">Cell inner membrane</location>
        <topology evidence="1">Single-pass membrane protein</topology>
    </subcellularLocation>
</comment>
<comment type="similarity">
    <text evidence="1">Belongs to the PsbH family.</text>
</comment>
<name>PSBH_GLOVI</name>
<keyword id="KW-0997">Cell inner membrane</keyword>
<keyword id="KW-1003">Cell membrane</keyword>
<keyword id="KW-0472">Membrane</keyword>
<keyword id="KW-0602">Photosynthesis</keyword>
<keyword id="KW-0604">Photosystem II</keyword>
<keyword id="KW-1185">Reference proteome</keyword>
<keyword id="KW-0812">Transmembrane</keyword>
<keyword id="KW-1133">Transmembrane helix</keyword>
<sequence length="78" mass="8386">MARRTWLGDRLKPLNSEIGKASPGWGTTPIMGALIALFGVFLIIILQIANNSLLLEGVNEGVPQSPAGQGYGYYPQSR</sequence>
<accession>Q7NCH7</accession>
<dbReference type="EMBL" id="BA000045">
    <property type="protein sequence ID" value="BAC90943.1"/>
    <property type="molecule type" value="Genomic_DNA"/>
</dbReference>
<dbReference type="RefSeq" id="NP_925948.1">
    <property type="nucleotide sequence ID" value="NC_005125.1"/>
</dbReference>
<dbReference type="RefSeq" id="WP_011142995.1">
    <property type="nucleotide sequence ID" value="NC_005125.1"/>
</dbReference>
<dbReference type="SMR" id="Q7NCH7"/>
<dbReference type="STRING" id="251221.gene:10760506"/>
<dbReference type="EnsemblBacteria" id="BAC90943">
    <property type="protein sequence ID" value="BAC90943"/>
    <property type="gene ID" value="BAC90943"/>
</dbReference>
<dbReference type="KEGG" id="gvi:gsr3002"/>
<dbReference type="eggNOG" id="ENOG50332MV">
    <property type="taxonomic scope" value="Bacteria"/>
</dbReference>
<dbReference type="HOGENOM" id="CLU_190203_0_0_3"/>
<dbReference type="InParanoid" id="Q7NCH7"/>
<dbReference type="OrthoDB" id="427121at2"/>
<dbReference type="PhylomeDB" id="Q7NCH7"/>
<dbReference type="Proteomes" id="UP000000557">
    <property type="component" value="Chromosome"/>
</dbReference>
<dbReference type="GO" id="GO:0009523">
    <property type="term" value="C:photosystem II"/>
    <property type="evidence" value="ECO:0007669"/>
    <property type="project" value="UniProtKB-KW"/>
</dbReference>
<dbReference type="GO" id="GO:0005886">
    <property type="term" value="C:plasma membrane"/>
    <property type="evidence" value="ECO:0007669"/>
    <property type="project" value="UniProtKB-SubCell"/>
</dbReference>
<dbReference type="GO" id="GO:0042301">
    <property type="term" value="F:phosphate ion binding"/>
    <property type="evidence" value="ECO:0007669"/>
    <property type="project" value="InterPro"/>
</dbReference>
<dbReference type="GO" id="GO:0015979">
    <property type="term" value="P:photosynthesis"/>
    <property type="evidence" value="ECO:0007669"/>
    <property type="project" value="UniProtKB-UniRule"/>
</dbReference>
<dbReference type="GO" id="GO:0050821">
    <property type="term" value="P:protein stabilization"/>
    <property type="evidence" value="ECO:0007669"/>
    <property type="project" value="InterPro"/>
</dbReference>
<dbReference type="Gene3D" id="1.20.5.880">
    <property type="entry name" value="Photosystem II reaction center protein H"/>
    <property type="match status" value="1"/>
</dbReference>
<dbReference type="HAMAP" id="MF_00752">
    <property type="entry name" value="PSII_PsbH"/>
    <property type="match status" value="1"/>
</dbReference>
<dbReference type="InterPro" id="IPR001056">
    <property type="entry name" value="PSII_PsbH"/>
</dbReference>
<dbReference type="InterPro" id="IPR036863">
    <property type="entry name" value="PSII_PsbH_sf"/>
</dbReference>
<dbReference type="NCBIfam" id="NF002728">
    <property type="entry name" value="PRK02624.1"/>
    <property type="match status" value="1"/>
</dbReference>
<dbReference type="PANTHER" id="PTHR34469">
    <property type="entry name" value="PHOTOSYSTEM II REACTION CENTER PROTEIN H"/>
    <property type="match status" value="1"/>
</dbReference>
<dbReference type="PANTHER" id="PTHR34469:SF4">
    <property type="entry name" value="PHOTOSYSTEM II REACTION CENTER PROTEIN H"/>
    <property type="match status" value="1"/>
</dbReference>
<dbReference type="Pfam" id="PF00737">
    <property type="entry name" value="PsbH"/>
    <property type="match status" value="1"/>
</dbReference>
<dbReference type="SUPFAM" id="SSF161025">
    <property type="entry name" value="Photosystem II 10 kDa phosphoprotein PsbH"/>
    <property type="match status" value="1"/>
</dbReference>
<organism>
    <name type="scientific">Gloeobacter violaceus (strain ATCC 29082 / PCC 7421)</name>
    <dbReference type="NCBI Taxonomy" id="251221"/>
    <lineage>
        <taxon>Bacteria</taxon>
        <taxon>Bacillati</taxon>
        <taxon>Cyanobacteriota</taxon>
        <taxon>Cyanophyceae</taxon>
        <taxon>Gloeobacterales</taxon>
        <taxon>Gloeobacteraceae</taxon>
        <taxon>Gloeobacter</taxon>
    </lineage>
</organism>
<gene>
    <name evidence="1" type="primary">psbH</name>
    <name type="ordered locus">gsr3002</name>
</gene>
<feature type="chain" id="PRO_0000070541" description="Photosystem II reaction center protein H">
    <location>
        <begin position="1"/>
        <end position="78"/>
    </location>
</feature>
<feature type="transmembrane region" description="Helical" evidence="1">
    <location>
        <begin position="29"/>
        <end position="49"/>
    </location>
</feature>
<proteinExistence type="inferred from homology"/>
<reference key="1">
    <citation type="journal article" date="2003" name="DNA Res.">
        <title>Complete genome structure of Gloeobacter violaceus PCC 7421, a cyanobacterium that lacks thylakoids.</title>
        <authorList>
            <person name="Nakamura Y."/>
            <person name="Kaneko T."/>
            <person name="Sato S."/>
            <person name="Mimuro M."/>
            <person name="Miyashita H."/>
            <person name="Tsuchiya T."/>
            <person name="Sasamoto S."/>
            <person name="Watanabe A."/>
            <person name="Kawashima K."/>
            <person name="Kishida Y."/>
            <person name="Kiyokawa C."/>
            <person name="Kohara M."/>
            <person name="Matsumoto M."/>
            <person name="Matsuno A."/>
            <person name="Nakazaki N."/>
            <person name="Shimpo S."/>
            <person name="Takeuchi C."/>
            <person name="Yamada M."/>
            <person name="Tabata S."/>
        </authorList>
    </citation>
    <scope>NUCLEOTIDE SEQUENCE [LARGE SCALE GENOMIC DNA]</scope>
    <source>
        <strain>ATCC 29082 / PCC 7421</strain>
    </source>
</reference>
<evidence type="ECO:0000255" key="1">
    <source>
        <dbReference type="HAMAP-Rule" id="MF_00752"/>
    </source>
</evidence>
<evidence type="ECO:0000305" key="2">
    <source>
    </source>
</evidence>